<sequence>MRPSSPSKDHYTQVPIKVQHRAAKRKRIRRKRVDLNCGCSYYVHINCHNHGFTHRGTHHCSSGDEWRLYLGGTKSPLFQDHSTRQQTVRNEPGHNNRPDTVQPQPEESVGTTSMLDGFQGLDDLTASDLAFLEGI</sequence>
<protein>
    <recommendedName>
        <fullName>Transcriptional activator protein</fullName>
        <shortName>TrAP</shortName>
    </recommendedName>
    <alternativeName>
        <fullName>Protein AC2</fullName>
    </alternativeName>
    <alternativeName>
        <fullName>Protein AL2</fullName>
    </alternativeName>
</protein>
<accession>Q08589</accession>
<keyword id="KW-0010">Activator</keyword>
<keyword id="KW-0238">DNA-binding</keyword>
<keyword id="KW-1035">Host cytoplasm</keyword>
<keyword id="KW-1048">Host nucleus</keyword>
<keyword id="KW-0945">Host-virus interaction</keyword>
<keyword id="KW-1090">Inhibition of host innate immune response by virus</keyword>
<keyword id="KW-0479">Metal-binding</keyword>
<keyword id="KW-0597">Phosphoprotein</keyword>
<keyword id="KW-0941">Suppressor of RNA silencing</keyword>
<keyword id="KW-0899">Viral immunoevasion</keyword>
<keyword id="KW-0862">Zinc</keyword>
<keyword id="KW-0863">Zinc-finger</keyword>
<comment type="function">
    <text evidence="1">Strong activator of the late viral genes promoters. Enhances the expression of the capsid protein and nuclear shuttle protein. Acts as a suppressor of RNA-mediated gene silencing, also known as post-transcriptional gene silencing (PTGS), a mechanism of plant viral defense that limits the accumulation of viral RNAs. Suppresses the host RNA silencing by inhibiting adenosine kinase 2 (ADK2), a kinase involved in a general methylation pathway. Also suppresses the host basal defense by interacting with and inhibiting SNF1 kinase, a key regulator of cell metabolism implicated in innate antiviral defense. Determines pathogenicity (By similarity).</text>
</comment>
<comment type="subunit">
    <text evidence="1">Monomer. Homodimer. Homooligomer. Self-interaction correlates with nuclear localization and efficient activation of transcription. Monomers suppress local silencing by interacting with and inactivating host adenosine kinase 2 (ADK2) in the cytoplasm. Interacts with and inhibits host SNF1 kinase. Binds to ssDNA (By similarity).</text>
</comment>
<comment type="subcellular location">
    <subcellularLocation>
        <location evidence="1">Host nucleus</location>
    </subcellularLocation>
    <subcellularLocation>
        <location evidence="1">Host cytoplasm</location>
    </subcellularLocation>
    <text evidence="1">The phosphorylated form appears to accumulate almost exclusively in the nucleus, whereas the non-phosphorylated form is found in both nucleus and cytoplasm.</text>
</comment>
<comment type="domain">
    <text evidence="1">The zinc finger and the transactivation region are involved in PTGS suppression.</text>
</comment>
<comment type="PTM">
    <text evidence="1">Phosphorylated.</text>
</comment>
<comment type="similarity">
    <text evidence="3">Belongs to the geminiviridae transcriptional activator protein family.</text>
</comment>
<organism>
    <name type="scientific">Indian cassava mosaic virus</name>
    <name type="common">ICMV</name>
    <dbReference type="NCBI Taxonomy" id="31600"/>
    <lineage>
        <taxon>Viruses</taxon>
        <taxon>Monodnaviria</taxon>
        <taxon>Shotokuvirae</taxon>
        <taxon>Cressdnaviricota</taxon>
        <taxon>Repensiviricetes</taxon>
        <taxon>Geplafuvirales</taxon>
        <taxon>Geminiviridae</taxon>
        <taxon>Begomovirus</taxon>
    </lineage>
</organism>
<proteinExistence type="inferred from homology"/>
<name>TRAP_ICMV</name>
<feature type="chain" id="PRO_0000222226" description="Transcriptional activator protein">
    <location>
        <begin position="1"/>
        <end position="135"/>
    </location>
</feature>
<feature type="zinc finger region" evidence="1">
    <location>
        <begin position="37"/>
        <end position="54"/>
    </location>
</feature>
<feature type="region of interest" description="Disordered" evidence="2">
    <location>
        <begin position="77"/>
        <end position="115"/>
    </location>
</feature>
<feature type="region of interest" description="Transactivation" evidence="1">
    <location>
        <begin position="120"/>
        <end position="135"/>
    </location>
</feature>
<feature type="short sequence motif" description="Nuclear localization signal" evidence="1">
    <location>
        <begin position="17"/>
        <end position="32"/>
    </location>
</feature>
<feature type="compositionally biased region" description="Polar residues" evidence="2">
    <location>
        <begin position="98"/>
        <end position="114"/>
    </location>
</feature>
<gene>
    <name type="ORF">AC2</name>
    <name type="ORF">AL2</name>
</gene>
<evidence type="ECO:0000250" key="1"/>
<evidence type="ECO:0000256" key="2">
    <source>
        <dbReference type="SAM" id="MobiDB-lite"/>
    </source>
</evidence>
<evidence type="ECO:0000305" key="3"/>
<organismHost>
    <name type="scientific">Manihot esculenta</name>
    <name type="common">Cassava</name>
    <name type="synonym">Jatropha manihot</name>
    <dbReference type="NCBI Taxonomy" id="3983"/>
</organismHost>
<dbReference type="EMBL" id="Z24758">
    <property type="protein sequence ID" value="CAA80887.1"/>
    <property type="molecule type" value="Genomic_DNA"/>
</dbReference>
<dbReference type="PIR" id="JQ2328">
    <property type="entry name" value="JQ2328"/>
</dbReference>
<dbReference type="RefSeq" id="NP_047232.1">
    <property type="nucleotide sequence ID" value="NC_001932.1"/>
</dbReference>
<dbReference type="KEGG" id="vg:991054"/>
<dbReference type="OrthoDB" id="11041at10239"/>
<dbReference type="Proteomes" id="UP000007210">
    <property type="component" value="Genome"/>
</dbReference>
<dbReference type="GO" id="GO:0030430">
    <property type="term" value="C:host cell cytoplasm"/>
    <property type="evidence" value="ECO:0007669"/>
    <property type="project" value="UniProtKB-SubCell"/>
</dbReference>
<dbReference type="GO" id="GO:0042025">
    <property type="term" value="C:host cell nucleus"/>
    <property type="evidence" value="ECO:0007669"/>
    <property type="project" value="UniProtKB-SubCell"/>
</dbReference>
<dbReference type="GO" id="GO:0019028">
    <property type="term" value="C:viral capsid"/>
    <property type="evidence" value="ECO:0007669"/>
    <property type="project" value="InterPro"/>
</dbReference>
<dbReference type="GO" id="GO:0003677">
    <property type="term" value="F:DNA binding"/>
    <property type="evidence" value="ECO:0007669"/>
    <property type="project" value="UniProtKB-KW"/>
</dbReference>
<dbReference type="GO" id="GO:0005198">
    <property type="term" value="F:structural molecule activity"/>
    <property type="evidence" value="ECO:0007669"/>
    <property type="project" value="InterPro"/>
</dbReference>
<dbReference type="GO" id="GO:0008270">
    <property type="term" value="F:zinc ion binding"/>
    <property type="evidence" value="ECO:0007669"/>
    <property type="project" value="UniProtKB-KW"/>
</dbReference>
<dbReference type="GO" id="GO:0052170">
    <property type="term" value="P:symbiont-mediated suppression of host innate immune response"/>
    <property type="evidence" value="ECO:0007669"/>
    <property type="project" value="UniProtKB-KW"/>
</dbReference>
<dbReference type="InterPro" id="IPR000942">
    <property type="entry name" value="Gemini_AL2"/>
</dbReference>
<dbReference type="Pfam" id="PF01440">
    <property type="entry name" value="Gemini_AL2"/>
    <property type="match status" value="1"/>
</dbReference>
<dbReference type="PRINTS" id="PR00230">
    <property type="entry name" value="GEMCOATAL2"/>
</dbReference>
<reference key="1">
    <citation type="journal article" date="1993" name="J. Gen. Virol.">
        <title>Nucleotide sequence evidence for the occurrence of three distinct whitefly-transmitted geminiviruses in cassava.</title>
        <authorList>
            <person name="Hong Y.G."/>
            <person name="Robinson D.J."/>
            <person name="Harrison B.D."/>
        </authorList>
    </citation>
    <scope>NUCLEOTIDE SEQUENCE [GENOMIC DNA]</scope>
</reference>